<evidence type="ECO:0000250" key="1"/>
<evidence type="ECO:0000255" key="2"/>
<evidence type="ECO:0000305" key="3"/>
<dbReference type="EMBL" id="CP000266">
    <property type="protein sequence ID" value="ABF03247.1"/>
    <property type="status" value="ALT_INIT"/>
    <property type="molecule type" value="Genomic_DNA"/>
</dbReference>
<dbReference type="KEGG" id="sfv:SFV_1028"/>
<dbReference type="HOGENOM" id="CLU_077905_0_0_6"/>
<dbReference type="Proteomes" id="UP000000659">
    <property type="component" value="Chromosome"/>
</dbReference>
<dbReference type="GO" id="GO:0033573">
    <property type="term" value="C:high-affinity iron permease complex"/>
    <property type="evidence" value="ECO:0007669"/>
    <property type="project" value="InterPro"/>
</dbReference>
<dbReference type="GO" id="GO:0015093">
    <property type="term" value="F:ferrous iron transmembrane transporter activity"/>
    <property type="evidence" value="ECO:0007669"/>
    <property type="project" value="TreeGrafter"/>
</dbReference>
<dbReference type="InterPro" id="IPR004923">
    <property type="entry name" value="FTR1/Fip1/EfeU"/>
</dbReference>
<dbReference type="NCBIfam" id="NF041756">
    <property type="entry name" value="EfeU"/>
    <property type="match status" value="1"/>
</dbReference>
<dbReference type="PANTHER" id="PTHR31632">
    <property type="entry name" value="IRON TRANSPORTER FTH1"/>
    <property type="match status" value="1"/>
</dbReference>
<dbReference type="PANTHER" id="PTHR31632:SF2">
    <property type="entry name" value="PLASMA MEMBRANE IRON PERMEASE"/>
    <property type="match status" value="1"/>
</dbReference>
<dbReference type="Pfam" id="PF03239">
    <property type="entry name" value="FTR1"/>
    <property type="match status" value="1"/>
</dbReference>
<name>EFEU_SHIF8</name>
<sequence length="235" mass="25860">MTSRSRQAAYSGIFINETTGEFPQKEQELFEGIVAVIAVVILTWMVFWMRKVSRNVKVQLEQAVDSALQRGNHHGWALVMMVFFAVAREGLESVFFLLAAFQQDVGIWPPLGAMLGLATAVVFGFLLYWGGIRLNLGAFFKWTSLFILFVAAGLAAGAIRAFHEAGLWNHFQEIAFDMSAVLSTHSLFGTLMEGIFGYQEAPSVSEVAVWFIYLIPALVAFALPPRAGATASRSA</sequence>
<protein>
    <recommendedName>
        <fullName>Ferrous iron permease EfeU</fullName>
    </recommendedName>
    <alternativeName>
        <fullName>Fe(2+) ion permease EfeU</fullName>
    </alternativeName>
    <alternativeName>
        <fullName>Ferrous iron uptake protein</fullName>
    </alternativeName>
</protein>
<organism>
    <name type="scientific">Shigella flexneri serotype 5b (strain 8401)</name>
    <dbReference type="NCBI Taxonomy" id="373384"/>
    <lineage>
        <taxon>Bacteria</taxon>
        <taxon>Pseudomonadati</taxon>
        <taxon>Pseudomonadota</taxon>
        <taxon>Gammaproteobacteria</taxon>
        <taxon>Enterobacterales</taxon>
        <taxon>Enterobacteriaceae</taxon>
        <taxon>Shigella</taxon>
    </lineage>
</organism>
<comment type="function">
    <text evidence="1">Uptake of Fe(2+) ions across the membrane.</text>
</comment>
<comment type="subunit">
    <text evidence="1">Part of a ferrous iron transporter composed of EfeU, EfeO and EfeB.</text>
</comment>
<comment type="subcellular location">
    <subcellularLocation>
        <location evidence="1">Cell inner membrane</location>
        <topology evidence="1">Multi-pass membrane protein</topology>
    </subcellularLocation>
</comment>
<comment type="similarity">
    <text evidence="3">Belongs to the oxidase-dependent Fe transporter (OFeT) (TC 9.A.10.1) family.</text>
</comment>
<comment type="sequence caution" evidence="3">
    <conflict type="erroneous initiation">
        <sequence resource="EMBL-CDS" id="ABF03247"/>
    </conflict>
    <text>Truncated N-terminus.</text>
</comment>
<feature type="chain" id="PRO_0000277547" description="Ferrous iron permease EfeU">
    <location>
        <begin position="1"/>
        <end position="235"/>
    </location>
</feature>
<feature type="topological domain" description="Periplasmic" evidence="2">
    <location>
        <begin position="1"/>
        <end position="28"/>
    </location>
</feature>
<feature type="transmembrane region" description="Helical" evidence="2">
    <location>
        <begin position="29"/>
        <end position="49"/>
    </location>
</feature>
<feature type="topological domain" description="Cytoplasmic" evidence="2">
    <location>
        <begin position="50"/>
        <end position="77"/>
    </location>
</feature>
<feature type="transmembrane region" description="Helical" evidence="2">
    <location>
        <begin position="78"/>
        <end position="98"/>
    </location>
</feature>
<feature type="topological domain" description="Periplasmic" evidence="2">
    <location>
        <begin position="99"/>
        <end position="106"/>
    </location>
</feature>
<feature type="transmembrane region" description="Helical" evidence="2">
    <location>
        <begin position="107"/>
        <end position="127"/>
    </location>
</feature>
<feature type="topological domain" description="Cytoplasmic" evidence="2">
    <location>
        <begin position="128"/>
        <end position="138"/>
    </location>
</feature>
<feature type="transmembrane region" description="Helical" evidence="2">
    <location>
        <begin position="139"/>
        <end position="159"/>
    </location>
</feature>
<feature type="topological domain" description="Periplasmic" evidence="2">
    <location>
        <begin position="160"/>
        <end position="177"/>
    </location>
</feature>
<feature type="transmembrane region" description="Helical" evidence="2">
    <location>
        <begin position="178"/>
        <end position="198"/>
    </location>
</feature>
<feature type="topological domain" description="Cytoplasmic" evidence="2">
    <location>
        <begin position="199"/>
        <end position="203"/>
    </location>
</feature>
<feature type="transmembrane region" description="Helical" evidence="2">
    <location>
        <begin position="204"/>
        <end position="224"/>
    </location>
</feature>
<feature type="topological domain" description="Periplasmic" evidence="2">
    <location>
        <begin position="225"/>
        <end position="235"/>
    </location>
</feature>
<gene>
    <name type="primary">efeU</name>
    <name type="ordered locus">SFV_1028</name>
</gene>
<keyword id="KW-0997">Cell inner membrane</keyword>
<keyword id="KW-1003">Cell membrane</keyword>
<keyword id="KW-0406">Ion transport</keyword>
<keyword id="KW-0408">Iron</keyword>
<keyword id="KW-0410">Iron transport</keyword>
<keyword id="KW-0472">Membrane</keyword>
<keyword id="KW-0812">Transmembrane</keyword>
<keyword id="KW-1133">Transmembrane helix</keyword>
<keyword id="KW-0813">Transport</keyword>
<accession>Q0T618</accession>
<reference key="1">
    <citation type="journal article" date="2006" name="BMC Genomics">
        <title>Complete genome sequence of Shigella flexneri 5b and comparison with Shigella flexneri 2a.</title>
        <authorList>
            <person name="Nie H."/>
            <person name="Yang F."/>
            <person name="Zhang X."/>
            <person name="Yang J."/>
            <person name="Chen L."/>
            <person name="Wang J."/>
            <person name="Xiong Z."/>
            <person name="Peng J."/>
            <person name="Sun L."/>
            <person name="Dong J."/>
            <person name="Xue Y."/>
            <person name="Xu X."/>
            <person name="Chen S."/>
            <person name="Yao Z."/>
            <person name="Shen Y."/>
            <person name="Jin Q."/>
        </authorList>
    </citation>
    <scope>NUCLEOTIDE SEQUENCE [LARGE SCALE GENOMIC DNA]</scope>
    <source>
        <strain>8401</strain>
    </source>
</reference>
<proteinExistence type="inferred from homology"/>